<keyword id="KW-1003">Cell membrane</keyword>
<keyword id="KW-0406">Ion transport</keyword>
<keyword id="KW-0472">Membrane</keyword>
<keyword id="KW-1185">Reference proteome</keyword>
<keyword id="KW-0812">Transmembrane</keyword>
<keyword id="KW-1133">Transmembrane helix</keyword>
<keyword id="KW-0813">Transport</keyword>
<comment type="function">
    <text evidence="1">Mediates high-affinity intracellular uptake of the rare oligo-element molybdenum.</text>
</comment>
<comment type="subcellular location">
    <subcellularLocation>
        <location evidence="1">Cell membrane</location>
        <topology evidence="1">Multi-pass membrane protein</topology>
    </subcellularLocation>
</comment>
<comment type="similarity">
    <text evidence="3">Belongs to the major facilitator superfamily.</text>
</comment>
<proteinExistence type="evidence at transcript level"/>
<accession>Q5R542</accession>
<accession>Q5R6V1</accession>
<dbReference type="EMBL" id="CR860382">
    <property type="protein sequence ID" value="CAH92509.1"/>
    <property type="molecule type" value="mRNA"/>
</dbReference>
<dbReference type="EMBL" id="CR861032">
    <property type="protein sequence ID" value="CAH93124.1"/>
    <property type="molecule type" value="mRNA"/>
</dbReference>
<dbReference type="RefSeq" id="NP_001126474.1">
    <property type="nucleotide sequence ID" value="NM_001133002.1"/>
</dbReference>
<dbReference type="SMR" id="Q5R542"/>
<dbReference type="FunCoup" id="Q5R542">
    <property type="interactions" value="567"/>
</dbReference>
<dbReference type="STRING" id="9601.ENSPPYP00000005216"/>
<dbReference type="GeneID" id="100173461"/>
<dbReference type="KEGG" id="pon:100173461"/>
<dbReference type="CTD" id="84975"/>
<dbReference type="eggNOG" id="KOG4332">
    <property type="taxonomic scope" value="Eukaryota"/>
</dbReference>
<dbReference type="InParanoid" id="Q5R542"/>
<dbReference type="OrthoDB" id="263957at2759"/>
<dbReference type="Proteomes" id="UP000001595">
    <property type="component" value="Unplaced"/>
</dbReference>
<dbReference type="GO" id="GO:0005886">
    <property type="term" value="C:plasma membrane"/>
    <property type="evidence" value="ECO:0007669"/>
    <property type="project" value="UniProtKB-SubCell"/>
</dbReference>
<dbReference type="GO" id="GO:0015098">
    <property type="term" value="F:molybdate ion transmembrane transporter activity"/>
    <property type="evidence" value="ECO:0007669"/>
    <property type="project" value="InterPro"/>
</dbReference>
<dbReference type="GO" id="GO:0006811">
    <property type="term" value="P:monoatomic ion transport"/>
    <property type="evidence" value="ECO:0007669"/>
    <property type="project" value="UniProtKB-KW"/>
</dbReference>
<dbReference type="CDD" id="cd17487">
    <property type="entry name" value="MFS_MFSD5_like"/>
    <property type="match status" value="1"/>
</dbReference>
<dbReference type="FunFam" id="1.20.1250.20:FF:000192">
    <property type="entry name" value="Major facilitator superfamily domain-containing 5"/>
    <property type="match status" value="1"/>
</dbReference>
<dbReference type="Gene3D" id="1.20.1250.20">
    <property type="entry name" value="MFS general substrate transporter like domains"/>
    <property type="match status" value="1"/>
</dbReference>
<dbReference type="InterPro" id="IPR036259">
    <property type="entry name" value="MFS_trans_sf"/>
</dbReference>
<dbReference type="InterPro" id="IPR008509">
    <property type="entry name" value="MOT2/MFSD5"/>
</dbReference>
<dbReference type="PANTHER" id="PTHR23516:SF1">
    <property type="entry name" value="MOLYBDATE-ANION TRANSPORTER"/>
    <property type="match status" value="1"/>
</dbReference>
<dbReference type="PANTHER" id="PTHR23516">
    <property type="entry name" value="SAM (S-ADENOSYL METHIONINE) TRANSPORTER"/>
    <property type="match status" value="1"/>
</dbReference>
<dbReference type="Pfam" id="PF05631">
    <property type="entry name" value="MFS_5"/>
    <property type="match status" value="1"/>
</dbReference>
<dbReference type="SUPFAM" id="SSF103473">
    <property type="entry name" value="MFS general substrate transporter"/>
    <property type="match status" value="1"/>
</dbReference>
<reference key="1">
    <citation type="submission" date="2004-11" db="EMBL/GenBank/DDBJ databases">
        <authorList>
            <consortium name="The German cDNA consortium"/>
        </authorList>
    </citation>
    <scope>NUCLEOTIDE SEQUENCE [LARGE SCALE MRNA]</scope>
    <source>
        <tissue>Liver</tissue>
    </source>
</reference>
<name>MFSD5_PONAB</name>
<gene>
    <name type="primary">MFSD5</name>
</gene>
<feature type="chain" id="PRO_0000273403" description="Molybdate-anion transporter">
    <location>
        <begin position="1"/>
        <end position="450"/>
    </location>
</feature>
<feature type="transmembrane region" description="Helical" evidence="2">
    <location>
        <begin position="1"/>
        <end position="21"/>
    </location>
</feature>
<feature type="transmembrane region" description="Helical" evidence="2">
    <location>
        <begin position="43"/>
        <end position="63"/>
    </location>
</feature>
<feature type="transmembrane region" description="Helical" evidence="2">
    <location>
        <begin position="79"/>
        <end position="99"/>
    </location>
</feature>
<feature type="transmembrane region" description="Helical" evidence="2">
    <location>
        <begin position="128"/>
        <end position="148"/>
    </location>
</feature>
<feature type="transmembrane region" description="Helical" evidence="2">
    <location>
        <begin position="174"/>
        <end position="194"/>
    </location>
</feature>
<feature type="transmembrane region" description="Helical" evidence="2">
    <location>
        <begin position="195"/>
        <end position="215"/>
    </location>
</feature>
<feature type="transmembrane region" description="Helical" evidence="2">
    <location>
        <begin position="249"/>
        <end position="269"/>
    </location>
</feature>
<feature type="transmembrane region" description="Helical" evidence="2">
    <location>
        <begin position="278"/>
        <end position="298"/>
    </location>
</feature>
<feature type="transmembrane region" description="Helical" evidence="2">
    <location>
        <begin position="311"/>
        <end position="331"/>
    </location>
</feature>
<feature type="transmembrane region" description="Helical" evidence="2">
    <location>
        <begin position="344"/>
        <end position="364"/>
    </location>
</feature>
<feature type="transmembrane region" description="Helical" evidence="2">
    <location>
        <begin position="376"/>
        <end position="396"/>
    </location>
</feature>
<feature type="transmembrane region" description="Helical" evidence="2">
    <location>
        <begin position="409"/>
        <end position="429"/>
    </location>
</feature>
<feature type="sequence conflict" description="In Ref. 1; CAH92509." evidence="3" ref="1">
    <original>S</original>
    <variation>F</variation>
    <location>
        <position position="41"/>
    </location>
</feature>
<feature type="sequence conflict" description="In Ref. 1; CAH92509." evidence="3" ref="1">
    <original>F</original>
    <variation>S</variation>
    <location>
        <position position="268"/>
    </location>
</feature>
<feature type="sequence conflict" description="In Ref. 1; CAH92509." evidence="3" ref="1">
    <original>S</original>
    <variation>P</variation>
    <location>
        <position position="325"/>
    </location>
</feature>
<protein>
    <recommendedName>
        <fullName>Molybdate-anion transporter</fullName>
    </recommendedName>
    <alternativeName>
        <fullName>Major facilitator superfamily domain-containing protein 5</fullName>
    </alternativeName>
    <alternativeName>
        <fullName>Molybdate transporter 2 homolog</fullName>
    </alternativeName>
</protein>
<evidence type="ECO:0000250" key="1"/>
<evidence type="ECO:0000255" key="2"/>
<evidence type="ECO:0000305" key="3"/>
<sequence length="450" mass="49747">MLVTAYLAFVGLLASCLGLELSRCRAKPPGRACSNPSFLRSQLDFYQVYFLALAADWLQAPYLYKLYQHYYFLEGQIAILYVCGLASTVLFGLVASSLVDWLGRKNSCVLFSLTYSLCCLTKLSQDYFVLLVGRALGGLSTALLFSAFEAWYIHEHVERHDFPTEWIPATFARAAFWNHVLAVVAGVAAEAVASWIGLGPVAPFVAAIPLLALAGALALRNWGENYDRQRAFSRTCAGGLRCLLSDRRVLLLGTIQALFESVIFIFVFLWTPVLDPHGAPLGIVFSSFMAASLLGSSLYRIATSKRYHLQPMHLLSLAVLIVVFSLFMLTFSTSPGQESPVESFIAFLLIELACGLYFPSMSFLRRKVIPETEQAGVLNWFRVPLHLLACLGLLVLHDSDRKTGTRNMFSICSAVMVMALLAVVGLFTVVRHDAELRVPSPTEEPYAPEL</sequence>
<organism>
    <name type="scientific">Pongo abelii</name>
    <name type="common">Sumatran orangutan</name>
    <name type="synonym">Pongo pygmaeus abelii</name>
    <dbReference type="NCBI Taxonomy" id="9601"/>
    <lineage>
        <taxon>Eukaryota</taxon>
        <taxon>Metazoa</taxon>
        <taxon>Chordata</taxon>
        <taxon>Craniata</taxon>
        <taxon>Vertebrata</taxon>
        <taxon>Euteleostomi</taxon>
        <taxon>Mammalia</taxon>
        <taxon>Eutheria</taxon>
        <taxon>Euarchontoglires</taxon>
        <taxon>Primates</taxon>
        <taxon>Haplorrhini</taxon>
        <taxon>Catarrhini</taxon>
        <taxon>Hominidae</taxon>
        <taxon>Pongo</taxon>
    </lineage>
</organism>